<comment type="function">
    <text evidence="1">Plays an important role in the de novo pathway of purine nucleotide biosynthesis. Catalyzes the first committed step in the biosynthesis of AMP from IMP.</text>
</comment>
<comment type="catalytic activity">
    <reaction evidence="1">
        <text>IMP + L-aspartate + GTP = N(6)-(1,2-dicarboxyethyl)-AMP + GDP + phosphate + 2 H(+)</text>
        <dbReference type="Rhea" id="RHEA:15753"/>
        <dbReference type="ChEBI" id="CHEBI:15378"/>
        <dbReference type="ChEBI" id="CHEBI:29991"/>
        <dbReference type="ChEBI" id="CHEBI:37565"/>
        <dbReference type="ChEBI" id="CHEBI:43474"/>
        <dbReference type="ChEBI" id="CHEBI:57567"/>
        <dbReference type="ChEBI" id="CHEBI:58053"/>
        <dbReference type="ChEBI" id="CHEBI:58189"/>
        <dbReference type="EC" id="6.3.4.4"/>
    </reaction>
</comment>
<comment type="cofactor">
    <cofactor evidence="1">
        <name>Mg(2+)</name>
        <dbReference type="ChEBI" id="CHEBI:18420"/>
    </cofactor>
    <text evidence="1">Binds 1 Mg(2+) ion per subunit.</text>
</comment>
<comment type="pathway">
    <text evidence="1">Purine metabolism; AMP biosynthesis via de novo pathway; AMP from IMP: step 1/2.</text>
</comment>
<comment type="subunit">
    <text evidence="1">Homodimer.</text>
</comment>
<comment type="subcellular location">
    <subcellularLocation>
        <location evidence="1">Cytoplasm</location>
    </subcellularLocation>
</comment>
<comment type="similarity">
    <text evidence="1">Belongs to the adenylosuccinate synthetase family.</text>
</comment>
<organism>
    <name type="scientific">Polynucleobacter asymbioticus (strain DSM 18221 / CIP 109841 / QLW-P1DMWA-1)</name>
    <name type="common">Polynucleobacter necessarius subsp. asymbioticus</name>
    <dbReference type="NCBI Taxonomy" id="312153"/>
    <lineage>
        <taxon>Bacteria</taxon>
        <taxon>Pseudomonadati</taxon>
        <taxon>Pseudomonadota</taxon>
        <taxon>Betaproteobacteria</taxon>
        <taxon>Burkholderiales</taxon>
        <taxon>Burkholderiaceae</taxon>
        <taxon>Polynucleobacter</taxon>
    </lineage>
</organism>
<reference key="1">
    <citation type="journal article" date="2012" name="Stand. Genomic Sci.">
        <title>Complete genome sequence of Polynucleobacter necessarius subsp. asymbioticus type strain (QLW-P1DMWA-1(T)).</title>
        <authorList>
            <person name="Meincke L."/>
            <person name="Copeland A."/>
            <person name="Lapidus A."/>
            <person name="Lucas S."/>
            <person name="Berry K.W."/>
            <person name="Del Rio T.G."/>
            <person name="Hammon N."/>
            <person name="Dalin E."/>
            <person name="Tice H."/>
            <person name="Pitluck S."/>
            <person name="Richardson P."/>
            <person name="Bruce D."/>
            <person name="Goodwin L."/>
            <person name="Han C."/>
            <person name="Tapia R."/>
            <person name="Detter J.C."/>
            <person name="Schmutz J."/>
            <person name="Brettin T."/>
            <person name="Larimer F."/>
            <person name="Land M."/>
            <person name="Hauser L."/>
            <person name="Kyrpides N.C."/>
            <person name="Ivanova N."/>
            <person name="Goker M."/>
            <person name="Woyke T."/>
            <person name="Wu Q.L."/>
            <person name="Pockl M."/>
            <person name="Hahn M.W."/>
            <person name="Klenk H.P."/>
        </authorList>
    </citation>
    <scope>NUCLEOTIDE SEQUENCE [LARGE SCALE GENOMIC DNA]</scope>
    <source>
        <strain>DSM 18221 / CIP 109841 / QLW-P1DMWA-1</strain>
    </source>
</reference>
<name>PURA_POLAQ</name>
<feature type="chain" id="PRO_1000073955" description="Adenylosuccinate synthetase">
    <location>
        <begin position="1"/>
        <end position="446"/>
    </location>
</feature>
<feature type="active site" description="Proton acceptor" evidence="1">
    <location>
        <position position="21"/>
    </location>
</feature>
<feature type="active site" description="Proton donor" evidence="1">
    <location>
        <position position="49"/>
    </location>
</feature>
<feature type="binding site" evidence="1">
    <location>
        <begin position="20"/>
        <end position="26"/>
    </location>
    <ligand>
        <name>GTP</name>
        <dbReference type="ChEBI" id="CHEBI:37565"/>
    </ligand>
</feature>
<feature type="binding site" description="in other chain" evidence="1">
    <location>
        <begin position="21"/>
        <end position="24"/>
    </location>
    <ligand>
        <name>IMP</name>
        <dbReference type="ChEBI" id="CHEBI:58053"/>
        <note>ligand shared between dimeric partners</note>
    </ligand>
</feature>
<feature type="binding site" evidence="1">
    <location>
        <position position="21"/>
    </location>
    <ligand>
        <name>Mg(2+)</name>
        <dbReference type="ChEBI" id="CHEBI:18420"/>
    </ligand>
</feature>
<feature type="binding site" description="in other chain" evidence="1">
    <location>
        <begin position="46"/>
        <end position="49"/>
    </location>
    <ligand>
        <name>IMP</name>
        <dbReference type="ChEBI" id="CHEBI:58053"/>
        <note>ligand shared between dimeric partners</note>
    </ligand>
</feature>
<feature type="binding site" evidence="1">
    <location>
        <begin position="48"/>
        <end position="50"/>
    </location>
    <ligand>
        <name>GTP</name>
        <dbReference type="ChEBI" id="CHEBI:37565"/>
    </ligand>
</feature>
<feature type="binding site" evidence="1">
    <location>
        <position position="48"/>
    </location>
    <ligand>
        <name>Mg(2+)</name>
        <dbReference type="ChEBI" id="CHEBI:18420"/>
    </ligand>
</feature>
<feature type="binding site" description="in other chain" evidence="1">
    <location>
        <position position="137"/>
    </location>
    <ligand>
        <name>IMP</name>
        <dbReference type="ChEBI" id="CHEBI:58053"/>
        <note>ligand shared between dimeric partners</note>
    </ligand>
</feature>
<feature type="binding site" evidence="1">
    <location>
        <position position="151"/>
    </location>
    <ligand>
        <name>IMP</name>
        <dbReference type="ChEBI" id="CHEBI:58053"/>
        <note>ligand shared between dimeric partners</note>
    </ligand>
</feature>
<feature type="binding site" description="in other chain" evidence="1">
    <location>
        <position position="232"/>
    </location>
    <ligand>
        <name>IMP</name>
        <dbReference type="ChEBI" id="CHEBI:58053"/>
        <note>ligand shared between dimeric partners</note>
    </ligand>
</feature>
<feature type="binding site" description="in other chain" evidence="1">
    <location>
        <position position="247"/>
    </location>
    <ligand>
        <name>IMP</name>
        <dbReference type="ChEBI" id="CHEBI:58053"/>
        <note>ligand shared between dimeric partners</note>
    </ligand>
</feature>
<feature type="binding site" evidence="1">
    <location>
        <begin position="315"/>
        <end position="321"/>
    </location>
    <ligand>
        <name>substrate</name>
    </ligand>
</feature>
<feature type="binding site" description="in other chain" evidence="1">
    <location>
        <position position="319"/>
    </location>
    <ligand>
        <name>IMP</name>
        <dbReference type="ChEBI" id="CHEBI:58053"/>
        <note>ligand shared between dimeric partners</note>
    </ligand>
</feature>
<feature type="binding site" evidence="1">
    <location>
        <position position="321"/>
    </location>
    <ligand>
        <name>GTP</name>
        <dbReference type="ChEBI" id="CHEBI:37565"/>
    </ligand>
</feature>
<feature type="binding site" evidence="1">
    <location>
        <begin position="347"/>
        <end position="349"/>
    </location>
    <ligand>
        <name>GTP</name>
        <dbReference type="ChEBI" id="CHEBI:37565"/>
    </ligand>
</feature>
<feature type="binding site" evidence="1">
    <location>
        <begin position="429"/>
        <end position="431"/>
    </location>
    <ligand>
        <name>GTP</name>
        <dbReference type="ChEBI" id="CHEBI:37565"/>
    </ligand>
</feature>
<accession>A4SYD1</accession>
<keyword id="KW-0963">Cytoplasm</keyword>
<keyword id="KW-0342">GTP-binding</keyword>
<keyword id="KW-0436">Ligase</keyword>
<keyword id="KW-0460">Magnesium</keyword>
<keyword id="KW-0479">Metal-binding</keyword>
<keyword id="KW-0547">Nucleotide-binding</keyword>
<keyword id="KW-0658">Purine biosynthesis</keyword>
<keyword id="KW-1185">Reference proteome</keyword>
<proteinExistence type="inferred from homology"/>
<sequence>MSSKQQAQGRNVVVIGTQWGDEGKGKVVDWLTDHAQAVVRFQGGHNAGHTLIIGDKKTILRLIPSGIMHKDVICYIGNGVVLSPEALFKEIGELEAAGLDVQSRLKISEATTLILPYHVAIDHAREKKRGEAKIGTTGRGIGPAYEDKVARRALRVQDLFYPEKFAEQLRENLEYHNFMLTNYYGAEPVNYEKTLAEAMSYAERLKPMVVDVSSALYAAEQAGQNLLFEGAQGTLLDIDHGTYPYVTSSNCVAGNAAAGSGVGPDSLQYILGITKAYCTRVGAGPFPSELYDHDNPARQDPIGVRLAEVGKEFGSVTGRPRRTGWLDAAALKRSIQINGLSGLCITKLDVLDGLETIRLCVGYNLDGKKLDVLPRGAESVARCEPIYEDFPGWKGTTFGIREWEKLPVEAQNFLRRIEEVAGKPIAMVSTGPERDETILLQHPFQD</sequence>
<gene>
    <name evidence="1" type="primary">purA</name>
    <name type="ordered locus">Pnuc_1281</name>
</gene>
<evidence type="ECO:0000255" key="1">
    <source>
        <dbReference type="HAMAP-Rule" id="MF_00011"/>
    </source>
</evidence>
<protein>
    <recommendedName>
        <fullName evidence="1">Adenylosuccinate synthetase</fullName>
        <shortName evidence="1">AMPSase</shortName>
        <shortName evidence="1">AdSS</shortName>
        <ecNumber evidence="1">6.3.4.4</ecNumber>
    </recommendedName>
    <alternativeName>
        <fullName evidence="1">IMP--aspartate ligase</fullName>
    </alternativeName>
</protein>
<dbReference type="EC" id="6.3.4.4" evidence="1"/>
<dbReference type="EMBL" id="CP000655">
    <property type="protein sequence ID" value="ABP34495.1"/>
    <property type="molecule type" value="Genomic_DNA"/>
</dbReference>
<dbReference type="RefSeq" id="WP_011903120.1">
    <property type="nucleotide sequence ID" value="NC_009379.1"/>
</dbReference>
<dbReference type="SMR" id="A4SYD1"/>
<dbReference type="GeneID" id="31481669"/>
<dbReference type="KEGG" id="pnu:Pnuc_1281"/>
<dbReference type="eggNOG" id="COG0104">
    <property type="taxonomic scope" value="Bacteria"/>
</dbReference>
<dbReference type="HOGENOM" id="CLU_029848_0_0_4"/>
<dbReference type="UniPathway" id="UPA00075">
    <property type="reaction ID" value="UER00335"/>
</dbReference>
<dbReference type="Proteomes" id="UP000000231">
    <property type="component" value="Chromosome"/>
</dbReference>
<dbReference type="GO" id="GO:0005737">
    <property type="term" value="C:cytoplasm"/>
    <property type="evidence" value="ECO:0007669"/>
    <property type="project" value="UniProtKB-SubCell"/>
</dbReference>
<dbReference type="GO" id="GO:0004019">
    <property type="term" value="F:adenylosuccinate synthase activity"/>
    <property type="evidence" value="ECO:0007669"/>
    <property type="project" value="UniProtKB-UniRule"/>
</dbReference>
<dbReference type="GO" id="GO:0005525">
    <property type="term" value="F:GTP binding"/>
    <property type="evidence" value="ECO:0007669"/>
    <property type="project" value="UniProtKB-UniRule"/>
</dbReference>
<dbReference type="GO" id="GO:0000287">
    <property type="term" value="F:magnesium ion binding"/>
    <property type="evidence" value="ECO:0007669"/>
    <property type="project" value="UniProtKB-UniRule"/>
</dbReference>
<dbReference type="GO" id="GO:0044208">
    <property type="term" value="P:'de novo' AMP biosynthetic process"/>
    <property type="evidence" value="ECO:0007669"/>
    <property type="project" value="UniProtKB-UniRule"/>
</dbReference>
<dbReference type="GO" id="GO:0046040">
    <property type="term" value="P:IMP metabolic process"/>
    <property type="evidence" value="ECO:0007669"/>
    <property type="project" value="TreeGrafter"/>
</dbReference>
<dbReference type="CDD" id="cd03108">
    <property type="entry name" value="AdSS"/>
    <property type="match status" value="1"/>
</dbReference>
<dbReference type="FunFam" id="1.10.300.10:FF:000001">
    <property type="entry name" value="Adenylosuccinate synthetase"/>
    <property type="match status" value="1"/>
</dbReference>
<dbReference type="FunFam" id="3.90.170.10:FF:000001">
    <property type="entry name" value="Adenylosuccinate synthetase"/>
    <property type="match status" value="1"/>
</dbReference>
<dbReference type="Gene3D" id="3.40.440.10">
    <property type="entry name" value="Adenylosuccinate Synthetase, subunit A, domain 1"/>
    <property type="match status" value="1"/>
</dbReference>
<dbReference type="Gene3D" id="1.10.300.10">
    <property type="entry name" value="Adenylosuccinate Synthetase, subunit A, domain 2"/>
    <property type="match status" value="1"/>
</dbReference>
<dbReference type="Gene3D" id="3.90.170.10">
    <property type="entry name" value="Adenylosuccinate Synthetase, subunit A, domain 3"/>
    <property type="match status" value="1"/>
</dbReference>
<dbReference type="HAMAP" id="MF_00011">
    <property type="entry name" value="Adenylosucc_synth"/>
    <property type="match status" value="1"/>
</dbReference>
<dbReference type="InterPro" id="IPR018220">
    <property type="entry name" value="Adenylosuccin_syn_GTP-bd"/>
</dbReference>
<dbReference type="InterPro" id="IPR033128">
    <property type="entry name" value="Adenylosuccin_syn_Lys_AS"/>
</dbReference>
<dbReference type="InterPro" id="IPR042109">
    <property type="entry name" value="Adenylosuccinate_synth_dom1"/>
</dbReference>
<dbReference type="InterPro" id="IPR042110">
    <property type="entry name" value="Adenylosuccinate_synth_dom2"/>
</dbReference>
<dbReference type="InterPro" id="IPR042111">
    <property type="entry name" value="Adenylosuccinate_synth_dom3"/>
</dbReference>
<dbReference type="InterPro" id="IPR001114">
    <property type="entry name" value="Adenylosuccinate_synthetase"/>
</dbReference>
<dbReference type="InterPro" id="IPR027417">
    <property type="entry name" value="P-loop_NTPase"/>
</dbReference>
<dbReference type="NCBIfam" id="NF002223">
    <property type="entry name" value="PRK01117.1"/>
    <property type="match status" value="1"/>
</dbReference>
<dbReference type="NCBIfam" id="TIGR00184">
    <property type="entry name" value="purA"/>
    <property type="match status" value="1"/>
</dbReference>
<dbReference type="PANTHER" id="PTHR11846">
    <property type="entry name" value="ADENYLOSUCCINATE SYNTHETASE"/>
    <property type="match status" value="1"/>
</dbReference>
<dbReference type="PANTHER" id="PTHR11846:SF0">
    <property type="entry name" value="ADENYLOSUCCINATE SYNTHETASE"/>
    <property type="match status" value="1"/>
</dbReference>
<dbReference type="Pfam" id="PF00709">
    <property type="entry name" value="Adenylsucc_synt"/>
    <property type="match status" value="1"/>
</dbReference>
<dbReference type="SMART" id="SM00788">
    <property type="entry name" value="Adenylsucc_synt"/>
    <property type="match status" value="1"/>
</dbReference>
<dbReference type="SUPFAM" id="SSF52540">
    <property type="entry name" value="P-loop containing nucleoside triphosphate hydrolases"/>
    <property type="match status" value="1"/>
</dbReference>
<dbReference type="PROSITE" id="PS01266">
    <property type="entry name" value="ADENYLOSUCCIN_SYN_1"/>
    <property type="match status" value="1"/>
</dbReference>
<dbReference type="PROSITE" id="PS00513">
    <property type="entry name" value="ADENYLOSUCCIN_SYN_2"/>
    <property type="match status" value="1"/>
</dbReference>